<evidence type="ECO:0000250" key="1">
    <source>
        <dbReference type="UniProtKB" id="Q03164"/>
    </source>
</evidence>
<evidence type="ECO:0000255" key="2">
    <source>
        <dbReference type="PROSITE-ProRule" id="PRU00035"/>
    </source>
</evidence>
<evidence type="ECO:0000255" key="3">
    <source>
        <dbReference type="PROSITE-ProRule" id="PRU00146"/>
    </source>
</evidence>
<evidence type="ECO:0000255" key="4">
    <source>
        <dbReference type="PROSITE-ProRule" id="PRU00155"/>
    </source>
</evidence>
<evidence type="ECO:0000255" key="5">
    <source>
        <dbReference type="PROSITE-ProRule" id="PRU00190"/>
    </source>
</evidence>
<evidence type="ECO:0000255" key="6">
    <source>
        <dbReference type="PROSITE-ProRule" id="PRU00407"/>
    </source>
</evidence>
<evidence type="ECO:0000255" key="7">
    <source>
        <dbReference type="PROSITE-ProRule" id="PRU00875"/>
    </source>
</evidence>
<evidence type="ECO:0000255" key="8">
    <source>
        <dbReference type="PROSITE-ProRule" id="PRU00876"/>
    </source>
</evidence>
<evidence type="ECO:0000255" key="9">
    <source>
        <dbReference type="PROSITE-ProRule" id="PRU01146"/>
    </source>
</evidence>
<evidence type="ECO:0000256" key="10">
    <source>
        <dbReference type="SAM" id="MobiDB-lite"/>
    </source>
</evidence>
<evidence type="ECO:0000269" key="11">
    <source>
    </source>
</evidence>
<evidence type="ECO:0000269" key="12">
    <source>
    </source>
</evidence>
<evidence type="ECO:0000269" key="13">
    <source>
    </source>
</evidence>
<evidence type="ECO:0000269" key="14">
    <source>
    </source>
</evidence>
<evidence type="ECO:0000269" key="15">
    <source>
    </source>
</evidence>
<evidence type="ECO:0000269" key="16">
    <source>
    </source>
</evidence>
<evidence type="ECO:0000269" key="17">
    <source>
    </source>
</evidence>
<evidence type="ECO:0000269" key="18">
    <source>
    </source>
</evidence>
<evidence type="ECO:0000303" key="19">
    <source>
    </source>
</evidence>
<evidence type="ECO:0000305" key="20"/>
<organism>
    <name type="scientific">Drosophila melanogaster</name>
    <name type="common">Fruit fly</name>
    <dbReference type="NCBI Taxonomy" id="7227"/>
    <lineage>
        <taxon>Eukaryota</taxon>
        <taxon>Metazoa</taxon>
        <taxon>Ecdysozoa</taxon>
        <taxon>Arthropoda</taxon>
        <taxon>Hexapoda</taxon>
        <taxon>Insecta</taxon>
        <taxon>Pterygota</taxon>
        <taxon>Neoptera</taxon>
        <taxon>Endopterygota</taxon>
        <taxon>Diptera</taxon>
        <taxon>Brachycera</taxon>
        <taxon>Muscomorpha</taxon>
        <taxon>Ephydroidea</taxon>
        <taxon>Drosophilidae</taxon>
        <taxon>Drosophila</taxon>
        <taxon>Sophophora</taxon>
    </lineage>
</organism>
<dbReference type="EC" id="2.1.1.355" evidence="13"/>
<dbReference type="EC" id="2.1.1.-" evidence="15"/>
<dbReference type="EMBL" id="M31617">
    <property type="protein sequence ID" value="AAA29025.1"/>
    <property type="molecule type" value="mRNA"/>
</dbReference>
<dbReference type="EMBL" id="Z50152">
    <property type="protein sequence ID" value="CAA90514.1"/>
    <property type="molecule type" value="Genomic_DNA"/>
</dbReference>
<dbReference type="EMBL" id="Z50152">
    <property type="protein sequence ID" value="CAA90513.1"/>
    <property type="molecule type" value="Genomic_DNA"/>
</dbReference>
<dbReference type="EMBL" id="Z31725">
    <property type="protein sequence ID" value="CAA83516.1"/>
    <property type="molecule type" value="Genomic_DNA"/>
</dbReference>
<dbReference type="EMBL" id="Z31725">
    <property type="protein sequence ID" value="CAA83515.1"/>
    <property type="molecule type" value="Genomic_DNA"/>
</dbReference>
<dbReference type="EMBL" id="AE014297">
    <property type="protein sequence ID" value="AAF55041.2"/>
    <property type="molecule type" value="Genomic_DNA"/>
</dbReference>
<dbReference type="EMBL" id="AE014297">
    <property type="protein sequence ID" value="AAN13599.1"/>
    <property type="molecule type" value="Genomic_DNA"/>
</dbReference>
<dbReference type="EMBL" id="AE014297">
    <property type="protein sequence ID" value="AAN13600.1"/>
    <property type="molecule type" value="Genomic_DNA"/>
</dbReference>
<dbReference type="EMBL" id="AE014297">
    <property type="protein sequence ID" value="AAN13601.1"/>
    <property type="molecule type" value="Genomic_DNA"/>
</dbReference>
<dbReference type="EMBL" id="AE014297">
    <property type="protein sequence ID" value="AAX52951.1"/>
    <property type="molecule type" value="Genomic_DNA"/>
</dbReference>
<dbReference type="EMBL" id="AY051904">
    <property type="protein sequence ID" value="AAK93328.1"/>
    <property type="status" value="ALT_INIT"/>
    <property type="molecule type" value="mRNA"/>
</dbReference>
<dbReference type="PIR" id="A35085">
    <property type="entry name" value="A35085"/>
</dbReference>
<dbReference type="RefSeq" id="NP_001014621.1">
    <molecule id="P20659-2"/>
    <property type="nucleotide sequence ID" value="NM_001014621.2"/>
</dbReference>
<dbReference type="RefSeq" id="NP_476769.1">
    <molecule id="P20659-1"/>
    <property type="nucleotide sequence ID" value="NM_057421.3"/>
</dbReference>
<dbReference type="RefSeq" id="NP_476770.1">
    <molecule id="P20659-2"/>
    <property type="nucleotide sequence ID" value="NM_057422.3"/>
</dbReference>
<dbReference type="RefSeq" id="NP_599108.1">
    <molecule id="P20659-2"/>
    <property type="nucleotide sequence ID" value="NM_134281.2"/>
</dbReference>
<dbReference type="RefSeq" id="NP_599109.1">
    <molecule id="P20659-1"/>
    <property type="nucleotide sequence ID" value="NM_134282.2"/>
</dbReference>
<dbReference type="SMR" id="P20659"/>
<dbReference type="BioGRID" id="66813">
    <property type="interactions" value="50"/>
</dbReference>
<dbReference type="ComplexPortal" id="CPX-2245">
    <property type="entry name" value="Trithorax acetylation complex 1"/>
</dbReference>
<dbReference type="ComplexPortal" id="CPX-2287">
    <property type="entry name" value="Histone-lysine N-methyltransferase TRX complex"/>
</dbReference>
<dbReference type="ELM" id="P20659"/>
<dbReference type="FunCoup" id="P20659">
    <property type="interactions" value="1462"/>
</dbReference>
<dbReference type="IntAct" id="P20659">
    <property type="interactions" value="14"/>
</dbReference>
<dbReference type="MINT" id="P20659"/>
<dbReference type="STRING" id="7227.FBpp0082406"/>
<dbReference type="GlyGen" id="P20659">
    <property type="glycosylation" value="5 sites, 1 O-linked glycan (1 site)"/>
</dbReference>
<dbReference type="iPTMnet" id="P20659"/>
<dbReference type="PaxDb" id="7227-FBpp0082406"/>
<dbReference type="DNASU" id="41737"/>
<dbReference type="EnsemblMetazoa" id="FBtr0082947">
    <molecule id="P20659-1"/>
    <property type="protein sequence ID" value="FBpp0082406"/>
    <property type="gene ID" value="FBgn0003862"/>
</dbReference>
<dbReference type="EnsemblMetazoa" id="FBtr0082948">
    <molecule id="P20659-2"/>
    <property type="protein sequence ID" value="FBpp0082407"/>
    <property type="gene ID" value="FBgn0003862"/>
</dbReference>
<dbReference type="EnsemblMetazoa" id="FBtr0082949">
    <molecule id="P20659-2"/>
    <property type="protein sequence ID" value="FBpp0082408"/>
    <property type="gene ID" value="FBgn0003862"/>
</dbReference>
<dbReference type="EnsemblMetazoa" id="FBtr0082950">
    <molecule id="P20659-1"/>
    <property type="protein sequence ID" value="FBpp0082409"/>
    <property type="gene ID" value="FBgn0003862"/>
</dbReference>
<dbReference type="EnsemblMetazoa" id="FBtr0100277">
    <molecule id="P20659-2"/>
    <property type="protein sequence ID" value="FBpp0099668"/>
    <property type="gene ID" value="FBgn0003862"/>
</dbReference>
<dbReference type="GeneID" id="41737"/>
<dbReference type="KEGG" id="dme:Dmel_CG8651"/>
<dbReference type="UCSC" id="CG8651-RC">
    <property type="organism name" value="d. melanogaster"/>
</dbReference>
<dbReference type="UCSC" id="CG8651-RD">
    <property type="organism name" value="d. melanogaster"/>
</dbReference>
<dbReference type="AGR" id="FB:FBgn0003862"/>
<dbReference type="CTD" id="41737"/>
<dbReference type="FlyBase" id="FBgn0003862">
    <property type="gene designation" value="trx"/>
</dbReference>
<dbReference type="VEuPathDB" id="VectorBase:FBgn0003862"/>
<dbReference type="eggNOG" id="KOG1084">
    <property type="taxonomic scope" value="Eukaryota"/>
</dbReference>
<dbReference type="GeneTree" id="ENSGT00940000163756"/>
<dbReference type="InParanoid" id="P20659"/>
<dbReference type="OMA" id="VVRSQQW"/>
<dbReference type="OrthoDB" id="308383at2759"/>
<dbReference type="PhylomeDB" id="P20659"/>
<dbReference type="Reactome" id="R-DME-8936459">
    <property type="pathway name" value="RUNX1 regulates genes involved in megakaryocyte differentiation and platelet function"/>
</dbReference>
<dbReference type="Reactome" id="R-DME-8939236">
    <property type="pathway name" value="RUNX1 regulates transcription of genes involved in differentiation of HSCs"/>
</dbReference>
<dbReference type="Reactome" id="R-DME-9772755">
    <property type="pathway name" value="Formation of WDR5-containing histone-modifying complexes"/>
</dbReference>
<dbReference type="SignaLink" id="P20659"/>
<dbReference type="BioGRID-ORCS" id="41737">
    <property type="hits" value="0 hits in 3 CRISPR screens"/>
</dbReference>
<dbReference type="ChiTaRS" id="trx">
    <property type="organism name" value="fly"/>
</dbReference>
<dbReference type="GenomeRNAi" id="41737"/>
<dbReference type="PRO" id="PR:P20659"/>
<dbReference type="Proteomes" id="UP000000803">
    <property type="component" value="Chromosome 3R"/>
</dbReference>
<dbReference type="Bgee" id="FBgn0003862">
    <property type="expression patterns" value="Expressed in peripheral glial cell (Drosophila) in insect leg and 313 other cell types or tissues"/>
</dbReference>
<dbReference type="GO" id="GO:0000123">
    <property type="term" value="C:histone acetyltransferase complex"/>
    <property type="evidence" value="ECO:0000314"/>
    <property type="project" value="FlyBase"/>
</dbReference>
<dbReference type="GO" id="GO:0035097">
    <property type="term" value="C:histone methyltransferase complex"/>
    <property type="evidence" value="ECO:0000314"/>
    <property type="project" value="FlyBase"/>
</dbReference>
<dbReference type="GO" id="GO:0044665">
    <property type="term" value="C:MLL1/2 complex"/>
    <property type="evidence" value="ECO:0000314"/>
    <property type="project" value="FlyBase"/>
</dbReference>
<dbReference type="GO" id="GO:0005634">
    <property type="term" value="C:nucleus"/>
    <property type="evidence" value="ECO:0000314"/>
    <property type="project" value="FlyBase"/>
</dbReference>
<dbReference type="GO" id="GO:0005700">
    <property type="term" value="C:polytene chromosome"/>
    <property type="evidence" value="ECO:0000314"/>
    <property type="project" value="UniProtKB"/>
</dbReference>
<dbReference type="GO" id="GO:0005704">
    <property type="term" value="C:polytene chromosome band"/>
    <property type="evidence" value="ECO:0000314"/>
    <property type="project" value="FlyBase"/>
</dbReference>
<dbReference type="GO" id="GO:0008023">
    <property type="term" value="C:transcription elongation factor complex"/>
    <property type="evidence" value="ECO:0000353"/>
    <property type="project" value="FlyBase"/>
</dbReference>
<dbReference type="GO" id="GO:0003682">
    <property type="term" value="F:chromatin binding"/>
    <property type="evidence" value="ECO:0000314"/>
    <property type="project" value="FlyBase"/>
</dbReference>
<dbReference type="GO" id="GO:0003700">
    <property type="term" value="F:DNA-binding transcription factor activity"/>
    <property type="evidence" value="ECO:0007669"/>
    <property type="project" value="InterPro"/>
</dbReference>
<dbReference type="GO" id="GO:0042800">
    <property type="term" value="F:histone H3K4 methyltransferase activity"/>
    <property type="evidence" value="ECO:0000314"/>
    <property type="project" value="FlyBase"/>
</dbReference>
<dbReference type="GO" id="GO:0140949">
    <property type="term" value="F:histone H3K9 trimethyltransferase activity"/>
    <property type="evidence" value="ECO:0007669"/>
    <property type="project" value="UniProtKB-EC"/>
</dbReference>
<dbReference type="GO" id="GO:0042802">
    <property type="term" value="F:identical protein binding"/>
    <property type="evidence" value="ECO:0000353"/>
    <property type="project" value="IntAct"/>
</dbReference>
<dbReference type="GO" id="GO:0042803">
    <property type="term" value="F:protein homodimerization activity"/>
    <property type="evidence" value="ECO:0000314"/>
    <property type="project" value="UniProtKB"/>
</dbReference>
<dbReference type="GO" id="GO:0008157">
    <property type="term" value="F:protein phosphatase 1 binding"/>
    <property type="evidence" value="ECO:0000353"/>
    <property type="project" value="FlyBase"/>
</dbReference>
<dbReference type="GO" id="GO:0106363">
    <property type="term" value="F:protein-cysteine methyltransferase activity"/>
    <property type="evidence" value="ECO:0000314"/>
    <property type="project" value="UniProtKB"/>
</dbReference>
<dbReference type="GO" id="GO:0043565">
    <property type="term" value="F:sequence-specific DNA binding"/>
    <property type="evidence" value="ECO:0007669"/>
    <property type="project" value="InterPro"/>
</dbReference>
<dbReference type="GO" id="GO:0008270">
    <property type="term" value="F:zinc ion binding"/>
    <property type="evidence" value="ECO:0000255"/>
    <property type="project" value="FlyBase"/>
</dbReference>
<dbReference type="GO" id="GO:0006325">
    <property type="term" value="P:chromatin organization"/>
    <property type="evidence" value="ECO:0000305"/>
    <property type="project" value="FlyBase"/>
</dbReference>
<dbReference type="GO" id="GO:0001654">
    <property type="term" value="P:eye development"/>
    <property type="evidence" value="ECO:0000315"/>
    <property type="project" value="UniProtKB"/>
</dbReference>
<dbReference type="GO" id="GO:0008354">
    <property type="term" value="P:germ cell migration"/>
    <property type="evidence" value="ECO:0000315"/>
    <property type="project" value="FlyBase"/>
</dbReference>
<dbReference type="GO" id="GO:0007482">
    <property type="term" value="P:haltere development"/>
    <property type="evidence" value="ECO:0000316"/>
    <property type="project" value="UniProtKB"/>
</dbReference>
<dbReference type="GO" id="GO:0007507">
    <property type="term" value="P:heart development"/>
    <property type="evidence" value="ECO:0000315"/>
    <property type="project" value="FlyBase"/>
</dbReference>
<dbReference type="GO" id="GO:0032259">
    <property type="term" value="P:methylation"/>
    <property type="evidence" value="ECO:0007669"/>
    <property type="project" value="UniProtKB-KW"/>
</dbReference>
<dbReference type="GO" id="GO:0045893">
    <property type="term" value="P:positive regulation of DNA-templated transcription"/>
    <property type="evidence" value="ECO:0000315"/>
    <property type="project" value="UniProtKB"/>
</dbReference>
<dbReference type="GO" id="GO:0045944">
    <property type="term" value="P:positive regulation of transcription by RNA polymerase II"/>
    <property type="evidence" value="ECO:0000315"/>
    <property type="project" value="UniProtKB"/>
</dbReference>
<dbReference type="GO" id="GO:0032968">
    <property type="term" value="P:positive regulation of transcription elongation by RNA polymerase II"/>
    <property type="evidence" value="ECO:0000314"/>
    <property type="project" value="FlyBase"/>
</dbReference>
<dbReference type="CDD" id="cd15664">
    <property type="entry name" value="ePHD_KMT2A_like"/>
    <property type="match status" value="1"/>
</dbReference>
<dbReference type="CDD" id="cd15506">
    <property type="entry name" value="PHD1_KMT2A_like"/>
    <property type="match status" value="1"/>
</dbReference>
<dbReference type="CDD" id="cd15508">
    <property type="entry name" value="PHD3_KMT2A_like"/>
    <property type="match status" value="1"/>
</dbReference>
<dbReference type="CDD" id="cd15489">
    <property type="entry name" value="PHD_SF"/>
    <property type="match status" value="1"/>
</dbReference>
<dbReference type="CDD" id="cd19170">
    <property type="entry name" value="SET_KMT2A_2B"/>
    <property type="match status" value="1"/>
</dbReference>
<dbReference type="FunFam" id="2.170.270.10:FF:000004">
    <property type="entry name" value="Histone-lysine N-methyltransferase"/>
    <property type="match status" value="1"/>
</dbReference>
<dbReference type="FunFam" id="3.30.160.360:FF:000010">
    <property type="entry name" value="Histone-lysine N-methyltransferase"/>
    <property type="match status" value="1"/>
</dbReference>
<dbReference type="FunFam" id="3.30.40.10:FF:000002">
    <property type="entry name" value="Histone-lysine N-methyltransferase"/>
    <property type="match status" value="1"/>
</dbReference>
<dbReference type="FunFam" id="3.30.40.10:FF:000471">
    <property type="entry name" value="Histone-lysine N-methyltransferase trithorax"/>
    <property type="match status" value="1"/>
</dbReference>
<dbReference type="Gene3D" id="3.30.160.360">
    <property type="match status" value="2"/>
</dbReference>
<dbReference type="Gene3D" id="1.20.920.10">
    <property type="entry name" value="Bromodomain-like"/>
    <property type="match status" value="1"/>
</dbReference>
<dbReference type="Gene3D" id="2.170.270.10">
    <property type="entry name" value="SET domain"/>
    <property type="match status" value="1"/>
</dbReference>
<dbReference type="Gene3D" id="3.30.40.10">
    <property type="entry name" value="Zinc/RING finger domain, C3HC4 (zinc finger)"/>
    <property type="match status" value="3"/>
</dbReference>
<dbReference type="InterPro" id="IPR036427">
    <property type="entry name" value="Bromodomain-like_sf"/>
</dbReference>
<dbReference type="InterPro" id="IPR034732">
    <property type="entry name" value="EPHD"/>
</dbReference>
<dbReference type="InterPro" id="IPR003889">
    <property type="entry name" value="FYrich_C"/>
</dbReference>
<dbReference type="InterPro" id="IPR003888">
    <property type="entry name" value="FYrich_N"/>
</dbReference>
<dbReference type="InterPro" id="IPR047219">
    <property type="entry name" value="KMT2A_2B_SET"/>
</dbReference>
<dbReference type="InterPro" id="IPR016569">
    <property type="entry name" value="MeTrfase_trithorax"/>
</dbReference>
<dbReference type="InterPro" id="IPR003616">
    <property type="entry name" value="Post-SET_dom"/>
</dbReference>
<dbReference type="InterPro" id="IPR001214">
    <property type="entry name" value="SET_dom"/>
</dbReference>
<dbReference type="InterPro" id="IPR046341">
    <property type="entry name" value="SET_dom_sf"/>
</dbReference>
<dbReference type="InterPro" id="IPR011011">
    <property type="entry name" value="Znf_FYVE_PHD"/>
</dbReference>
<dbReference type="InterPro" id="IPR001628">
    <property type="entry name" value="Znf_hrmn_rcpt"/>
</dbReference>
<dbReference type="InterPro" id="IPR001965">
    <property type="entry name" value="Znf_PHD"/>
</dbReference>
<dbReference type="InterPro" id="IPR019787">
    <property type="entry name" value="Znf_PHD-finger"/>
</dbReference>
<dbReference type="InterPro" id="IPR001841">
    <property type="entry name" value="Znf_RING"/>
</dbReference>
<dbReference type="InterPro" id="IPR013083">
    <property type="entry name" value="Znf_RING/FYVE/PHD"/>
</dbReference>
<dbReference type="PANTHER" id="PTHR45838:SF4">
    <property type="entry name" value="HISTONE-LYSINE N-METHYLTRANSFERASE TRITHORAX"/>
    <property type="match status" value="1"/>
</dbReference>
<dbReference type="PANTHER" id="PTHR45838">
    <property type="entry name" value="HISTONE-LYSINE-N-METHYLTRANSFERASE 2 KMT2 FAMILY MEMBER"/>
    <property type="match status" value="1"/>
</dbReference>
<dbReference type="Pfam" id="PF05965">
    <property type="entry name" value="FYRC"/>
    <property type="match status" value="1"/>
</dbReference>
<dbReference type="Pfam" id="PF05964">
    <property type="entry name" value="FYRN"/>
    <property type="match status" value="1"/>
</dbReference>
<dbReference type="Pfam" id="PF00628">
    <property type="entry name" value="PHD"/>
    <property type="match status" value="1"/>
</dbReference>
<dbReference type="Pfam" id="PF00856">
    <property type="entry name" value="SET"/>
    <property type="match status" value="1"/>
</dbReference>
<dbReference type="Pfam" id="PF13771">
    <property type="entry name" value="zf-HC5HC2H"/>
    <property type="match status" value="1"/>
</dbReference>
<dbReference type="PIRSF" id="PIRSF010354">
    <property type="entry name" value="Methyltransferase_trithorax"/>
    <property type="match status" value="1"/>
</dbReference>
<dbReference type="SMART" id="SM00542">
    <property type="entry name" value="FYRC"/>
    <property type="match status" value="1"/>
</dbReference>
<dbReference type="SMART" id="SM00541">
    <property type="entry name" value="FYRN"/>
    <property type="match status" value="1"/>
</dbReference>
<dbReference type="SMART" id="SM00249">
    <property type="entry name" value="PHD"/>
    <property type="match status" value="4"/>
</dbReference>
<dbReference type="SMART" id="SM00508">
    <property type="entry name" value="PostSET"/>
    <property type="match status" value="2"/>
</dbReference>
<dbReference type="SMART" id="SM00184">
    <property type="entry name" value="RING"/>
    <property type="match status" value="4"/>
</dbReference>
<dbReference type="SMART" id="SM00317">
    <property type="entry name" value="SET"/>
    <property type="match status" value="1"/>
</dbReference>
<dbReference type="SUPFAM" id="SSF57903">
    <property type="entry name" value="FYVE/PHD zinc finger"/>
    <property type="match status" value="2"/>
</dbReference>
<dbReference type="SUPFAM" id="SSF82199">
    <property type="entry name" value="SET domain"/>
    <property type="match status" value="1"/>
</dbReference>
<dbReference type="PROSITE" id="PS50014">
    <property type="entry name" value="BROMODOMAIN_2"/>
    <property type="match status" value="1"/>
</dbReference>
<dbReference type="PROSITE" id="PS51805">
    <property type="entry name" value="EPHD"/>
    <property type="match status" value="1"/>
</dbReference>
<dbReference type="PROSITE" id="PS51543">
    <property type="entry name" value="FYRC"/>
    <property type="match status" value="1"/>
</dbReference>
<dbReference type="PROSITE" id="PS51542">
    <property type="entry name" value="FYRN"/>
    <property type="match status" value="1"/>
</dbReference>
<dbReference type="PROSITE" id="PS51030">
    <property type="entry name" value="NUCLEAR_REC_DBD_2"/>
    <property type="match status" value="1"/>
</dbReference>
<dbReference type="PROSITE" id="PS50868">
    <property type="entry name" value="POST_SET"/>
    <property type="match status" value="1"/>
</dbReference>
<dbReference type="PROSITE" id="PS50280">
    <property type="entry name" value="SET"/>
    <property type="match status" value="1"/>
</dbReference>
<dbReference type="PROSITE" id="PS01359">
    <property type="entry name" value="ZF_PHD_1"/>
    <property type="match status" value="4"/>
</dbReference>
<dbReference type="PROSITE" id="PS50016">
    <property type="entry name" value="ZF_PHD_2"/>
    <property type="match status" value="3"/>
</dbReference>
<accession>P20659</accession>
<accession>A4V2V9</accession>
<accession>A4V2W0</accession>
<accession>Q27255</accession>
<accession>Q27327</accession>
<accession>Q8INF9</accession>
<accession>Q960R2</accession>
<accession>Q9VFL1</accession>
<name>TRX_DROME</name>
<gene>
    <name evidence="19" type="primary">trx</name>
    <name type="synonym">KMT2A</name>
    <name type="ORF">CG8651</name>
</gene>
<feature type="chain" id="PRO_0000124874" description="Histone-lysine N-methyltransferase trithorax">
    <location>
        <begin position="1"/>
        <end position="3726"/>
    </location>
</feature>
<feature type="domain" description="Bromo" evidence="2">
    <location>
        <begin position="1496"/>
        <end position="1663"/>
    </location>
</feature>
<feature type="domain" description="FYR N-terminal" evidence="7">
    <location>
        <begin position="1884"/>
        <end position="1941"/>
    </location>
</feature>
<feature type="domain" description="FYR C-terminal" evidence="8">
    <location>
        <begin position="3386"/>
        <end position="3470"/>
    </location>
</feature>
<feature type="domain" description="SET" evidence="5">
    <location>
        <begin position="3588"/>
        <end position="3704"/>
    </location>
</feature>
<feature type="domain" description="Post-SET" evidence="4">
    <location>
        <begin position="3710"/>
        <end position="3726"/>
    </location>
</feature>
<feature type="DNA-binding region" description="Nuclear receptor" evidence="6">
    <location>
        <begin position="759"/>
        <end position="884"/>
    </location>
</feature>
<feature type="zinc finger region" description="PHD-type 1" evidence="3">
    <location>
        <begin position="1266"/>
        <end position="1347"/>
    </location>
</feature>
<feature type="zinc finger region" description="PHD-type 2" evidence="3">
    <location>
        <begin position="1348"/>
        <end position="1393"/>
    </location>
</feature>
<feature type="zinc finger region" description="PHD-type 3" evidence="3">
    <location>
        <begin position="1421"/>
        <end position="1482"/>
    </location>
</feature>
<feature type="zinc finger region" description="C2HC pre-PHD-type" evidence="9">
    <location>
        <begin position="1734"/>
        <end position="1774"/>
    </location>
</feature>
<feature type="zinc finger region" description="PHD-type 4" evidence="9">
    <location>
        <begin position="1795"/>
        <end position="1842"/>
    </location>
</feature>
<feature type="region of interest" description="Disordered" evidence="10">
    <location>
        <begin position="1"/>
        <end position="247"/>
    </location>
</feature>
<feature type="region of interest" description="Disordered" evidence="10">
    <location>
        <begin position="321"/>
        <end position="352"/>
    </location>
</feature>
<feature type="region of interest" description="Disordered" evidence="10">
    <location>
        <begin position="371"/>
        <end position="429"/>
    </location>
</feature>
<feature type="region of interest" description="Disordered" evidence="10">
    <location>
        <begin position="509"/>
        <end position="624"/>
    </location>
</feature>
<feature type="region of interest" description="Disordered" evidence="10">
    <location>
        <begin position="915"/>
        <end position="937"/>
    </location>
</feature>
<feature type="region of interest" description="Disordered" evidence="10">
    <location>
        <begin position="981"/>
        <end position="1049"/>
    </location>
</feature>
<feature type="region of interest" description="Disordered" evidence="10">
    <location>
        <begin position="1115"/>
        <end position="1184"/>
    </location>
</feature>
<feature type="region of interest" description="Disordered" evidence="10">
    <location>
        <begin position="1208"/>
        <end position="1231"/>
    </location>
</feature>
<feature type="region of interest" description="Disordered" evidence="10">
    <location>
        <begin position="1573"/>
        <end position="1592"/>
    </location>
</feature>
<feature type="region of interest" description="Disordered" evidence="10">
    <location>
        <begin position="1991"/>
        <end position="2019"/>
    </location>
</feature>
<feature type="region of interest" description="Disordered" evidence="10">
    <location>
        <begin position="2068"/>
        <end position="2110"/>
    </location>
</feature>
<feature type="region of interest" description="Disordered" evidence="10">
    <location>
        <begin position="2283"/>
        <end position="2302"/>
    </location>
</feature>
<feature type="region of interest" description="Disordered" evidence="10">
    <location>
        <begin position="2649"/>
        <end position="2669"/>
    </location>
</feature>
<feature type="region of interest" description="Disordered" evidence="10">
    <location>
        <begin position="2866"/>
        <end position="2894"/>
    </location>
</feature>
<feature type="region of interest" description="Disordered" evidence="10">
    <location>
        <begin position="3029"/>
        <end position="3096"/>
    </location>
</feature>
<feature type="region of interest" description="Disordered" evidence="10">
    <location>
        <begin position="3347"/>
        <end position="3381"/>
    </location>
</feature>
<feature type="compositionally biased region" description="Low complexity" evidence="10">
    <location>
        <begin position="31"/>
        <end position="53"/>
    </location>
</feature>
<feature type="compositionally biased region" description="Low complexity" evidence="10">
    <location>
        <begin position="71"/>
        <end position="101"/>
    </location>
</feature>
<feature type="compositionally biased region" description="Gly residues" evidence="10">
    <location>
        <begin position="102"/>
        <end position="115"/>
    </location>
</feature>
<feature type="compositionally biased region" description="Basic and acidic residues" evidence="10">
    <location>
        <begin position="126"/>
        <end position="143"/>
    </location>
</feature>
<feature type="compositionally biased region" description="Low complexity" evidence="10">
    <location>
        <begin position="147"/>
        <end position="205"/>
    </location>
</feature>
<feature type="compositionally biased region" description="Polar residues" evidence="10">
    <location>
        <begin position="206"/>
        <end position="215"/>
    </location>
</feature>
<feature type="compositionally biased region" description="Low complexity" evidence="10">
    <location>
        <begin position="222"/>
        <end position="247"/>
    </location>
</feature>
<feature type="compositionally biased region" description="Low complexity" evidence="10">
    <location>
        <begin position="384"/>
        <end position="402"/>
    </location>
</feature>
<feature type="compositionally biased region" description="Low complexity" evidence="10">
    <location>
        <begin position="509"/>
        <end position="525"/>
    </location>
</feature>
<feature type="compositionally biased region" description="Acidic residues" evidence="10">
    <location>
        <begin position="553"/>
        <end position="586"/>
    </location>
</feature>
<feature type="compositionally biased region" description="Basic and acidic residues" evidence="10">
    <location>
        <begin position="587"/>
        <end position="610"/>
    </location>
</feature>
<feature type="compositionally biased region" description="Polar residues" evidence="10">
    <location>
        <begin position="918"/>
        <end position="937"/>
    </location>
</feature>
<feature type="compositionally biased region" description="Basic and acidic residues" evidence="10">
    <location>
        <begin position="986"/>
        <end position="1000"/>
    </location>
</feature>
<feature type="compositionally biased region" description="Low complexity" evidence="10">
    <location>
        <begin position="1031"/>
        <end position="1041"/>
    </location>
</feature>
<feature type="compositionally biased region" description="Basic and acidic residues" evidence="10">
    <location>
        <begin position="1123"/>
        <end position="1132"/>
    </location>
</feature>
<feature type="compositionally biased region" description="Low complexity" evidence="10">
    <location>
        <begin position="1173"/>
        <end position="1183"/>
    </location>
</feature>
<feature type="compositionally biased region" description="Low complexity" evidence="10">
    <location>
        <begin position="1211"/>
        <end position="1223"/>
    </location>
</feature>
<feature type="compositionally biased region" description="Low complexity" evidence="10">
    <location>
        <begin position="2074"/>
        <end position="2087"/>
    </location>
</feature>
<feature type="compositionally biased region" description="Low complexity" evidence="10">
    <location>
        <begin position="3032"/>
        <end position="3043"/>
    </location>
</feature>
<feature type="compositionally biased region" description="Polar residues" evidence="10">
    <location>
        <begin position="3044"/>
        <end position="3057"/>
    </location>
</feature>
<feature type="binding site" evidence="5">
    <location>
        <position position="3598"/>
    </location>
    <ligand>
        <name>S-adenosyl-L-methionine</name>
        <dbReference type="ChEBI" id="CHEBI:59789"/>
    </ligand>
</feature>
<feature type="binding site" evidence="5">
    <location>
        <position position="3600"/>
    </location>
    <ligand>
        <name>S-adenosyl-L-methionine</name>
        <dbReference type="ChEBI" id="CHEBI:59789"/>
    </ligand>
</feature>
<feature type="binding site" evidence="5">
    <location>
        <position position="3642"/>
    </location>
    <ligand>
        <name>S-adenosyl-L-methionine</name>
        <dbReference type="ChEBI" id="CHEBI:59789"/>
    </ligand>
</feature>
<feature type="binding site" evidence="1">
    <location>
        <begin position="3665"/>
        <end position="3666"/>
    </location>
    <ligand>
        <name>S-adenosyl-L-methionine</name>
        <dbReference type="ChEBI" id="CHEBI:59789"/>
    </ligand>
</feature>
<feature type="binding site" evidence="1">
    <location>
        <position position="3668"/>
    </location>
    <ligand>
        <name>Zn(2+)</name>
        <dbReference type="ChEBI" id="CHEBI:29105"/>
    </ligand>
</feature>
<feature type="binding site" evidence="1">
    <location>
        <position position="3714"/>
    </location>
    <ligand>
        <name>Zn(2+)</name>
        <dbReference type="ChEBI" id="CHEBI:29105"/>
    </ligand>
</feature>
<feature type="binding site" evidence="1">
    <location>
        <position position="3716"/>
    </location>
    <ligand>
        <name>Zn(2+)</name>
        <dbReference type="ChEBI" id="CHEBI:29105"/>
    </ligand>
</feature>
<feature type="binding site" evidence="1">
    <location>
        <position position="3721"/>
    </location>
    <ligand>
        <name>Zn(2+)</name>
        <dbReference type="ChEBI" id="CHEBI:29105"/>
    </ligand>
</feature>
<feature type="modified residue" description="S-methylcysteine; by autocatalysis" evidence="15">
    <location>
        <position position="3641"/>
    </location>
</feature>
<feature type="splice variant" id="VSP_006665" description="In isoform B." evidence="20">
    <location>
        <begin position="1"/>
        <end position="368"/>
    </location>
</feature>
<feature type="mutagenesis site" description="Abolished auto-methylation." evidence="15">
    <original>C</original>
    <variation>S</variation>
    <location>
        <position position="3641"/>
    </location>
</feature>
<feature type="sequence conflict" description="In Ref. 1; AAA29025, 2; CAA90513 and 3; CAA83516." evidence="20" ref="1 2 3">
    <original>GTTSEATTSGL</original>
    <variation>LEQLVKQQPLV</variation>
    <location>
        <begin position="239"/>
        <end position="249"/>
    </location>
</feature>
<feature type="sequence conflict" description="In Ref. 1; AAA29025, 2; CAA90513 and 3; CAA83516." evidence="20" ref="1 2 3">
    <original>N</original>
    <variation>K</variation>
    <location>
        <position position="303"/>
    </location>
</feature>
<feature type="sequence conflict" description="In Ref. 1; AAA29025, 2; CAA90513 and 3; CAA83516." evidence="20" ref="1 2 3">
    <original>A</original>
    <variation>L</variation>
    <location>
        <position position="337"/>
    </location>
</feature>
<feature type="sequence conflict" description="In Ref. 1; AAA29025, 2; CAA90513/CAA90514 and 3; CAA83515/CAA83516." evidence="20" ref="1 2 3">
    <original>G</original>
    <variation>R</variation>
    <location>
        <position position="521"/>
    </location>
</feature>
<feature type="sequence conflict" description="In Ref. 1; AAA29025, 2; CAA90513/CAA90514 and 3; CAA83515/CAA83516." evidence="20" ref="1 2 3">
    <original>E</original>
    <variation>Q</variation>
    <location>
        <position position="578"/>
    </location>
</feature>
<feature type="sequence conflict" description="In Ref. 1; AAA29025, 2; CAA90513/CAA90514 and 3; CAA83515/CAA83516." evidence="20" ref="1 2 3">
    <original>V</original>
    <variation>A</variation>
    <location>
        <position position="587"/>
    </location>
</feature>
<feature type="sequence conflict" description="In Ref. 1; AAA29025, 2; CAA90513/CAA90514 and 3; CAA83515/CAA83516." evidence="20" ref="1 2 3">
    <original>N</original>
    <variation>I</variation>
    <location>
        <position position="700"/>
    </location>
</feature>
<feature type="sequence conflict" description="In Ref. 1; AAA29025, 2; CAA90513/CAA90514 and 3; CAA83515/CAA83516." evidence="20" ref="1 2 3">
    <original>T</original>
    <variation>A</variation>
    <location>
        <position position="720"/>
    </location>
</feature>
<feature type="sequence conflict" description="In Ref. 1; AAA29025, 2; CAA90513/CAA90514 and 3; CAA83515/CAA83516." evidence="20" ref="1 2 3">
    <original>K</original>
    <variation>P</variation>
    <location>
        <position position="1073"/>
    </location>
</feature>
<feature type="sequence conflict" description="In Ref. 1; AAA29025, 2; CAA90513/CAA90514 and 3; CAA83515/CAA83516." evidence="20" ref="1 2 3">
    <original>KL</original>
    <variation>NV</variation>
    <location>
        <begin position="1529"/>
        <end position="1530"/>
    </location>
</feature>
<feature type="sequence conflict" description="In Ref. 1; AAA29025, 2; CAA90513/CAA90514 and 3; CAA83515/CAA83516." evidence="20" ref="1 2 3">
    <original>S</original>
    <variation>P</variation>
    <location>
        <position position="1594"/>
    </location>
</feature>
<feature type="sequence conflict" description="In Ref. 1; AAA29025, 2; CAA90513/CAA90514 and 3; CAA83515/CAA83516." evidence="20" ref="1 2 3">
    <original>A</original>
    <variation>E</variation>
    <location>
        <position position="1627"/>
    </location>
</feature>
<feature type="sequence conflict" description="In Ref. 1; AAA29025, 2; CAA90513/CAA90514 and 3; CAA83515/CAA83516." evidence="20" ref="1 2 3">
    <original>T</original>
    <variation>A</variation>
    <location>
        <position position="1690"/>
    </location>
</feature>
<feature type="sequence conflict" description="In Ref. 1; AAA29025, 2; CAA90513/CAA90514 and 3; CAA83515/CAA83516." evidence="20" ref="1 2 3">
    <original>E</original>
    <variation>Q</variation>
    <location>
        <position position="2010"/>
    </location>
</feature>
<feature type="sequence conflict" description="In Ref. 1; AAA29025." evidence="20" ref="1">
    <original>P</original>
    <variation>PWLTSPLKFLGLSTHGGLLLWLLLGVVVRLKQGG</variation>
    <location>
        <position position="2025"/>
    </location>
</feature>
<feature type="sequence conflict" description="In Ref. 2; CAA90513/CAA90514 and 3; CAA83515/CAA83516." evidence="20" ref="2 3">
    <original>S</original>
    <variation>R</variation>
    <location>
        <position position="2341"/>
    </location>
</feature>
<feature type="sequence conflict" description="In Ref. 1; AAA29025, 2; CAA90513/CAA90514 and 3; CAA83515/CAA83516." evidence="20" ref="1 2 3">
    <original>S</original>
    <variation>N</variation>
    <location>
        <position position="2365"/>
    </location>
</feature>
<feature type="sequence conflict" description="In Ref. 2; CAA90513/CAA90514 and 3; CAA83515/CAA83516." evidence="20" ref="2 3">
    <original>S</original>
    <variation>G</variation>
    <location>
        <position position="2392"/>
    </location>
</feature>
<feature type="sequence conflict" description="In Ref. 1; AAA29025, 2; CAA90513/CAA90514 and 3; CAA83515/CAA83516." evidence="20" ref="1 2 3">
    <original>E</original>
    <variation>Q</variation>
    <location>
        <position position="3157"/>
    </location>
</feature>
<feature type="sequence conflict" description="In Ref. 1; AAA29025, 2; CAA90513/CAA90514 and 3; CAA83515/CAA83516." evidence="20" ref="1 2 3">
    <original>A</original>
    <variation>R</variation>
    <location>
        <position position="3234"/>
    </location>
</feature>
<feature type="sequence conflict" description="In Ref. 1; AAA29025, 2; CAA90513/CAA90514 and 3; CAA83515/CAA83516." evidence="20" ref="1 2 3">
    <original>L</original>
    <variation>V</variation>
    <location>
        <position position="3690"/>
    </location>
</feature>
<protein>
    <recommendedName>
        <fullName>Histone-lysine N-methyltransferase trithorax</fullName>
        <ecNumber evidence="13">2.1.1.355</ecNumber>
    </recommendedName>
    <alternativeName>
        <fullName evidence="20">Cysteine methyltransferase KMT2A</fullName>
        <ecNumber evidence="15">2.1.1.-</ecNumber>
    </alternativeName>
    <alternativeName>
        <fullName>Lysine N-methyltransferase 2A</fullName>
    </alternativeName>
</protein>
<comment type="function">
    <text evidence="13 14 15 16 17 18">Histone methyltransferase that methylates 'Lys-4' of histone H3 (H3K4me) (PubMed:12408863). H3K4me represents a specific tag for epigenetic transcriptional activation (PubMed:12408863). Functions in segment determination through interaction with genes of bithorax (BX-C) and antennapedia (ANT-C) complexes (PubMed:2107543, PubMed:7958911). Acts as an activator of BX-C (PubMed:7924996). Involved in the very early regulation of homeotic genes expressed only in the posterior region of the embryo (PubMed:25310983, PubMed:7924996). Also has auto-methylation activity on Cys-3641 (PubMed:24235145).</text>
</comment>
<comment type="catalytic activity">
    <reaction evidence="13">
        <text>L-lysyl(9)-[histone H3] + 3 S-adenosyl-L-methionine = N(6),N(6),N(6)-trimethyl-L-lysyl(9)-[histone H3] + 3 S-adenosyl-L-homocysteine + 3 H(+)</text>
        <dbReference type="Rhea" id="RHEA:60276"/>
        <dbReference type="Rhea" id="RHEA-COMP:15538"/>
        <dbReference type="Rhea" id="RHEA-COMP:15546"/>
        <dbReference type="ChEBI" id="CHEBI:15378"/>
        <dbReference type="ChEBI" id="CHEBI:29969"/>
        <dbReference type="ChEBI" id="CHEBI:57856"/>
        <dbReference type="ChEBI" id="CHEBI:59789"/>
        <dbReference type="ChEBI" id="CHEBI:61961"/>
        <dbReference type="EC" id="2.1.1.355"/>
    </reaction>
    <physiologicalReaction direction="left-to-right" evidence="13">
        <dbReference type="Rhea" id="RHEA:60277"/>
    </physiologicalReaction>
</comment>
<comment type="catalytic activity">
    <reaction evidence="15">
        <text>L-cysteinyl-[protein] + S-adenosyl-L-methionine = S-methyl-L-cysteinyl-[protein] + S-adenosyl-L-homocysteine + H(+)</text>
        <dbReference type="Rhea" id="RHEA:66544"/>
        <dbReference type="Rhea" id="RHEA-COMP:10131"/>
        <dbReference type="Rhea" id="RHEA-COMP:10132"/>
        <dbReference type="ChEBI" id="CHEBI:15378"/>
        <dbReference type="ChEBI" id="CHEBI:29950"/>
        <dbReference type="ChEBI" id="CHEBI:57856"/>
        <dbReference type="ChEBI" id="CHEBI:59789"/>
        <dbReference type="ChEBI" id="CHEBI:82612"/>
    </reaction>
    <physiologicalReaction direction="left-to-right" evidence="15">
        <dbReference type="Rhea" id="RHEA:66545"/>
    </physiologicalReaction>
</comment>
<comment type="subunit">
    <text evidence="11 12 16">Interacts (via SET domain) with ash1 (via SET domain) (PubMed:10454589, PubMed:10656681). Interacts with Nup98 (PubMed:25310983).</text>
</comment>
<comment type="interaction">
    <interactant intactId="EBI-591327">
        <id>P20659</id>
    </interactant>
    <interactant intactId="EBI-128445">
        <id>Q9V3G3</id>
        <label>cyp33</label>
    </interactant>
    <organismsDiffer>false</organismsDiffer>
    <experiments>2</experiments>
</comment>
<comment type="interaction">
    <interactant intactId="EBI-591327">
        <id>P20659</id>
    </interactant>
    <interactant intactId="EBI-591327">
        <id>P20659</id>
        <label>trx</label>
    </interactant>
    <organismsDiffer>false</organismsDiffer>
    <experiments>7</experiments>
</comment>
<comment type="subcellular location">
    <subcellularLocation>
        <location evidence="6 18">Nucleus</location>
    </subcellularLocation>
    <subcellularLocation>
        <location evidence="18">Chromosome</location>
    </subcellularLocation>
    <text>Binds to 16 discrete sites on larval salivary gland polytene chromosomes.</text>
</comment>
<comment type="alternative products">
    <event type="alternative splicing"/>
    <isoform>
        <id>P20659-1</id>
        <name>A</name>
        <name>D</name>
        <sequence type="displayed"/>
    </isoform>
    <isoform>
        <id>P20659-2</id>
        <name>B</name>
        <name>C</name>
        <name>E</name>
        <sequence type="described" ref="VSP_006665"/>
    </isoform>
</comment>
<comment type="tissue specificity">
    <text evidence="17">Maternal isoforms are expressed in syncytial blastoderm, confined to the ventral region fated to become mesoderm. An additional broad domain of expression arises during cellularization and is quickly resolved into four pair-rule-like stripes in the posterior half of the embryo.</text>
</comment>
<comment type="developmental stage">
    <text evidence="17">Expressed both maternally and zygotically.</text>
</comment>
<comment type="disruption phenotype">
    <text evidence="16">RNAi-mediated knock-down in the larva results in decreased expression of Hox genes such as Ubx and Antp.</text>
</comment>
<comment type="similarity">
    <text evidence="5">Belongs to the class V-like SAM-binding methyltransferase superfamily. Histone-lysine methyltransferase family. TRX/MLL subfamily.</text>
</comment>
<comment type="sequence caution" evidence="20">
    <conflict type="erroneous initiation">
        <sequence resource="EMBL-CDS" id="AAK93328"/>
    </conflict>
</comment>
<reference key="1">
    <citation type="journal article" date="1990" name="Proc. Natl. Acad. Sci. U.S.A.">
        <title>The trithorax gene, a trans-acting regulator of the bithorax complex in Drosophila, encodes a protein with zinc-binding domains.</title>
        <authorList>
            <person name="Mazo A.M."/>
            <person name="Huang D.-H."/>
            <person name="Mozer B.A."/>
            <person name="Dawid I.B."/>
        </authorList>
    </citation>
    <scope>NUCLEOTIDE SEQUENCE [MRNA] (ISOFORM A)</scope>
    <scope>FUNCTION</scope>
</reference>
<reference key="2">
    <citation type="journal article" date="1994" name="Development">
        <title>The bithorax complex is regulated by trithorax earlier during Drosophila embryogenesis than is the Antennapedia complex, correlating with a bithorax-like expression pattern of distinct early trithorax transcripts.</title>
        <authorList>
            <person name="Sedkov Y."/>
            <person name="Tillib S."/>
            <person name="Mizrokhi L."/>
            <person name="Mazo A."/>
        </authorList>
    </citation>
    <scope>NUCLEOTIDE SEQUENCE [GENOMIC DNA]</scope>
    <scope>ALTERNATIVE SPLICING</scope>
    <scope>FUNCTION</scope>
    <scope>DEVELOPMENTAL STAGE</scope>
    <scope>TISSUE SPECIFICITY</scope>
</reference>
<reference key="3">
    <citation type="journal article" date="1995" name="Mech. Dev.">
        <title>Conservation of structure and expression of the trithorax gene between Drosophila virilis and Drosophila melanogaster.</title>
        <authorList>
            <person name="Tillib S."/>
            <person name="Sedkov Y."/>
            <person name="Mizrokhi L."/>
            <person name="Mazo A."/>
        </authorList>
    </citation>
    <scope>NUCLEOTIDE SEQUENCE [GENOMIC DNA]</scope>
    <scope>ALTERNATIVE SPLICING</scope>
    <source>
        <strain>Oregon-R</strain>
        <tissue>Embryo</tissue>
    </source>
</reference>
<reference key="4">
    <citation type="journal article" date="2000" name="Science">
        <title>The genome sequence of Drosophila melanogaster.</title>
        <authorList>
            <person name="Adams M.D."/>
            <person name="Celniker S.E."/>
            <person name="Holt R.A."/>
            <person name="Evans C.A."/>
            <person name="Gocayne J.D."/>
            <person name="Amanatides P.G."/>
            <person name="Scherer S.E."/>
            <person name="Li P.W."/>
            <person name="Hoskins R.A."/>
            <person name="Galle R.F."/>
            <person name="George R.A."/>
            <person name="Lewis S.E."/>
            <person name="Richards S."/>
            <person name="Ashburner M."/>
            <person name="Henderson S.N."/>
            <person name="Sutton G.G."/>
            <person name="Wortman J.R."/>
            <person name="Yandell M.D."/>
            <person name="Zhang Q."/>
            <person name="Chen L.X."/>
            <person name="Brandon R.C."/>
            <person name="Rogers Y.-H.C."/>
            <person name="Blazej R.G."/>
            <person name="Champe M."/>
            <person name="Pfeiffer B.D."/>
            <person name="Wan K.H."/>
            <person name="Doyle C."/>
            <person name="Baxter E.G."/>
            <person name="Helt G."/>
            <person name="Nelson C.R."/>
            <person name="Miklos G.L.G."/>
            <person name="Abril J.F."/>
            <person name="Agbayani A."/>
            <person name="An H.-J."/>
            <person name="Andrews-Pfannkoch C."/>
            <person name="Baldwin D."/>
            <person name="Ballew R.M."/>
            <person name="Basu A."/>
            <person name="Baxendale J."/>
            <person name="Bayraktaroglu L."/>
            <person name="Beasley E.M."/>
            <person name="Beeson K.Y."/>
            <person name="Benos P.V."/>
            <person name="Berman B.P."/>
            <person name="Bhandari D."/>
            <person name="Bolshakov S."/>
            <person name="Borkova D."/>
            <person name="Botchan M.R."/>
            <person name="Bouck J."/>
            <person name="Brokstein P."/>
            <person name="Brottier P."/>
            <person name="Burtis K.C."/>
            <person name="Busam D.A."/>
            <person name="Butler H."/>
            <person name="Cadieu E."/>
            <person name="Center A."/>
            <person name="Chandra I."/>
            <person name="Cherry J.M."/>
            <person name="Cawley S."/>
            <person name="Dahlke C."/>
            <person name="Davenport L.B."/>
            <person name="Davies P."/>
            <person name="de Pablos B."/>
            <person name="Delcher A."/>
            <person name="Deng Z."/>
            <person name="Mays A.D."/>
            <person name="Dew I."/>
            <person name="Dietz S.M."/>
            <person name="Dodson K."/>
            <person name="Doup L.E."/>
            <person name="Downes M."/>
            <person name="Dugan-Rocha S."/>
            <person name="Dunkov B.C."/>
            <person name="Dunn P."/>
            <person name="Durbin K.J."/>
            <person name="Evangelista C.C."/>
            <person name="Ferraz C."/>
            <person name="Ferriera S."/>
            <person name="Fleischmann W."/>
            <person name="Fosler C."/>
            <person name="Gabrielian A.E."/>
            <person name="Garg N.S."/>
            <person name="Gelbart W.M."/>
            <person name="Glasser K."/>
            <person name="Glodek A."/>
            <person name="Gong F."/>
            <person name="Gorrell J.H."/>
            <person name="Gu Z."/>
            <person name="Guan P."/>
            <person name="Harris M."/>
            <person name="Harris N.L."/>
            <person name="Harvey D.A."/>
            <person name="Heiman T.J."/>
            <person name="Hernandez J.R."/>
            <person name="Houck J."/>
            <person name="Hostin D."/>
            <person name="Houston K.A."/>
            <person name="Howland T.J."/>
            <person name="Wei M.-H."/>
            <person name="Ibegwam C."/>
            <person name="Jalali M."/>
            <person name="Kalush F."/>
            <person name="Karpen G.H."/>
            <person name="Ke Z."/>
            <person name="Kennison J.A."/>
            <person name="Ketchum K.A."/>
            <person name="Kimmel B.E."/>
            <person name="Kodira C.D."/>
            <person name="Kraft C.L."/>
            <person name="Kravitz S."/>
            <person name="Kulp D."/>
            <person name="Lai Z."/>
            <person name="Lasko P."/>
            <person name="Lei Y."/>
            <person name="Levitsky A.A."/>
            <person name="Li J.H."/>
            <person name="Li Z."/>
            <person name="Liang Y."/>
            <person name="Lin X."/>
            <person name="Liu X."/>
            <person name="Mattei B."/>
            <person name="McIntosh T.C."/>
            <person name="McLeod M.P."/>
            <person name="McPherson D."/>
            <person name="Merkulov G."/>
            <person name="Milshina N.V."/>
            <person name="Mobarry C."/>
            <person name="Morris J."/>
            <person name="Moshrefi A."/>
            <person name="Mount S.M."/>
            <person name="Moy M."/>
            <person name="Murphy B."/>
            <person name="Murphy L."/>
            <person name="Muzny D.M."/>
            <person name="Nelson D.L."/>
            <person name="Nelson D.R."/>
            <person name="Nelson K.A."/>
            <person name="Nixon K."/>
            <person name="Nusskern D.R."/>
            <person name="Pacleb J.M."/>
            <person name="Palazzolo M."/>
            <person name="Pittman G.S."/>
            <person name="Pan S."/>
            <person name="Pollard J."/>
            <person name="Puri V."/>
            <person name="Reese M.G."/>
            <person name="Reinert K."/>
            <person name="Remington K."/>
            <person name="Saunders R.D.C."/>
            <person name="Scheeler F."/>
            <person name="Shen H."/>
            <person name="Shue B.C."/>
            <person name="Siden-Kiamos I."/>
            <person name="Simpson M."/>
            <person name="Skupski M.P."/>
            <person name="Smith T.J."/>
            <person name="Spier E."/>
            <person name="Spradling A.C."/>
            <person name="Stapleton M."/>
            <person name="Strong R."/>
            <person name="Sun E."/>
            <person name="Svirskas R."/>
            <person name="Tector C."/>
            <person name="Turner R."/>
            <person name="Venter E."/>
            <person name="Wang A.H."/>
            <person name="Wang X."/>
            <person name="Wang Z.-Y."/>
            <person name="Wassarman D.A."/>
            <person name="Weinstock G.M."/>
            <person name="Weissenbach J."/>
            <person name="Williams S.M."/>
            <person name="Woodage T."/>
            <person name="Worley K.C."/>
            <person name="Wu D."/>
            <person name="Yang S."/>
            <person name="Yao Q.A."/>
            <person name="Ye J."/>
            <person name="Yeh R.-F."/>
            <person name="Zaveri J.S."/>
            <person name="Zhan M."/>
            <person name="Zhang G."/>
            <person name="Zhao Q."/>
            <person name="Zheng L."/>
            <person name="Zheng X.H."/>
            <person name="Zhong F.N."/>
            <person name="Zhong W."/>
            <person name="Zhou X."/>
            <person name="Zhu S.C."/>
            <person name="Zhu X."/>
            <person name="Smith H.O."/>
            <person name="Gibbs R.A."/>
            <person name="Myers E.W."/>
            <person name="Rubin G.M."/>
            <person name="Venter J.C."/>
        </authorList>
    </citation>
    <scope>NUCLEOTIDE SEQUENCE [LARGE SCALE GENOMIC DNA]</scope>
    <source>
        <strain>Berkeley</strain>
    </source>
</reference>
<reference key="5">
    <citation type="journal article" date="2002" name="Genome Biol.">
        <title>Annotation of the Drosophila melanogaster euchromatic genome: a systematic review.</title>
        <authorList>
            <person name="Misra S."/>
            <person name="Crosby M.A."/>
            <person name="Mungall C.J."/>
            <person name="Matthews B.B."/>
            <person name="Campbell K.S."/>
            <person name="Hradecky P."/>
            <person name="Huang Y."/>
            <person name="Kaminker J.S."/>
            <person name="Millburn G.H."/>
            <person name="Prochnik S.E."/>
            <person name="Smith C.D."/>
            <person name="Tupy J.L."/>
            <person name="Whitfield E.J."/>
            <person name="Bayraktaroglu L."/>
            <person name="Berman B.P."/>
            <person name="Bettencourt B.R."/>
            <person name="Celniker S.E."/>
            <person name="de Grey A.D.N.J."/>
            <person name="Drysdale R.A."/>
            <person name="Harris N.L."/>
            <person name="Richter J."/>
            <person name="Russo S."/>
            <person name="Schroeder A.J."/>
            <person name="Shu S.Q."/>
            <person name="Stapleton M."/>
            <person name="Yamada C."/>
            <person name="Ashburner M."/>
            <person name="Gelbart W.M."/>
            <person name="Rubin G.M."/>
            <person name="Lewis S.E."/>
        </authorList>
    </citation>
    <scope>GENOME REANNOTATION</scope>
    <scope>ALTERNATIVE SPLICING</scope>
    <source>
        <strain>Berkeley</strain>
    </source>
</reference>
<reference key="6">
    <citation type="journal article" date="2002" name="Genome Biol.">
        <title>A Drosophila full-length cDNA resource.</title>
        <authorList>
            <person name="Stapleton M."/>
            <person name="Carlson J.W."/>
            <person name="Brokstein P."/>
            <person name="Yu C."/>
            <person name="Champe M."/>
            <person name="George R.A."/>
            <person name="Guarin H."/>
            <person name="Kronmiller B."/>
            <person name="Pacleb J.M."/>
            <person name="Park S."/>
            <person name="Wan K.H."/>
            <person name="Rubin G.M."/>
            <person name="Celniker S.E."/>
        </authorList>
    </citation>
    <scope>NUCLEOTIDE SEQUENCE [LARGE SCALE MRNA] OF 2970-3726 (ISOFORMS A/B)</scope>
    <source>
        <strain>Berkeley</strain>
        <tissue>Embryo</tissue>
    </source>
</reference>
<reference key="7">
    <citation type="journal article" date="1999" name="Mol. Cell. Biol.">
        <title>Trithorax and ASH1 interact directly and associate with the trithorax group-responsive bxd region of the Ultrabithorax promoter.</title>
        <authorList>
            <person name="Rozovskaia T."/>
            <person name="Tillib S."/>
            <person name="Smith S."/>
            <person name="Sedkov Y."/>
            <person name="Rozenblatt-Rosen O."/>
            <person name="Petruk S."/>
            <person name="Yano T."/>
            <person name="Nakamura T."/>
            <person name="Ben-Simchon L."/>
            <person name="Gildea J."/>
            <person name="Croce C.M."/>
            <person name="Shearn A."/>
            <person name="Canaani E."/>
            <person name="Mazo A."/>
        </authorList>
    </citation>
    <scope>INTERACTION WITH ASH1</scope>
</reference>
<reference key="8">
    <citation type="journal article" date="2000" name="Oncogene">
        <title>Self-association of the SET domains of human ALL-1 and of Drosophila TRITHORAX and ASH1 proteins.</title>
        <authorList>
            <person name="Rozovskaia T."/>
            <person name="Rozenblatt-Rosen O."/>
            <person name="Sedkov Y."/>
            <person name="Burakov D."/>
            <person name="Yano T."/>
            <person name="Nakamura T."/>
            <person name="Petruck S."/>
            <person name="Ben-Simchon L."/>
            <person name="Croce C.M."/>
            <person name="Mazo A."/>
            <person name="Canaani E."/>
        </authorList>
    </citation>
    <scope>INTERACTION WITH ASH1</scope>
</reference>
<reference key="9">
    <citation type="journal article" date="1994" name="Genes Dev.">
        <title>The Drosophila trithorax gene encodes a chromosomal protein and directly regulates the region-specific homeotic gene fork head.</title>
        <authorList>
            <person name="Kuzin B."/>
            <person name="Tillib S."/>
            <person name="Sedkov Y."/>
            <person name="Mizrokhi L."/>
            <person name="Mazo A."/>
        </authorList>
    </citation>
    <scope>FUNCTION</scope>
    <scope>SUBCELLULAR LOCATION</scope>
</reference>
<reference key="10">
    <citation type="journal article" date="2002" name="Cell">
        <title>Drosophila Enhancer of zeste/ESC complexes have a histone H3 methyltransferase activity that marks chromosomal Polycomb sites.</title>
        <authorList>
            <person name="Czermin B."/>
            <person name="Melfi R."/>
            <person name="McCabe D."/>
            <person name="Seitz V."/>
            <person name="Imhof A."/>
            <person name="Pirrotta V."/>
        </authorList>
    </citation>
    <scope>FUNCTION</scope>
    <scope>CATALYTIC ACTIVITY</scope>
</reference>
<reference key="11">
    <citation type="journal article" date="2014" name="Cell Rep.">
        <title>Nucleoporin Nup98 associates with Trx/MLL and NSL histone-modifying complexes and regulates Hox gene expression.</title>
        <authorList>
            <person name="Pascual-Garcia P."/>
            <person name="Jeong J."/>
            <person name="Capelson M."/>
        </authorList>
    </citation>
    <scope>FUNCTION</scope>
    <scope>INTERACTION WITH NUP98</scope>
    <scope>DISRUPTION PHENOTYPE</scope>
</reference>
<reference key="12">
    <citation type="journal article" date="2014" name="J. Biol. Chem.">
        <title>Automethylation activities within the mixed lineage leukemia-1 (MLL1) core complex reveal evidence supporting a 'two-active site' model for multiple histone H3 lysine 4 methylation.</title>
        <authorList>
            <person name="Patel A."/>
            <person name="Vought V.E."/>
            <person name="Swatkoski S."/>
            <person name="Viggiano S."/>
            <person name="Howard B."/>
            <person name="Dharmarajan V."/>
            <person name="Monteith K.E."/>
            <person name="Kupakuwana G."/>
            <person name="Namitz K.E."/>
            <person name="Shinsky S.A."/>
            <person name="Cotter R.J."/>
            <person name="Cosgrove M.S."/>
        </authorList>
    </citation>
    <scope>FUNCTION</scope>
    <scope>CATALYTIC ACTIVITY</scope>
    <scope>METHYLATION AT CYS-3641</scope>
    <scope>MUTAGENESIS OF CYS-3641</scope>
</reference>
<proteinExistence type="evidence at protein level"/>
<keyword id="KW-0010">Activator</keyword>
<keyword id="KW-0025">Alternative splicing</keyword>
<keyword id="KW-0103">Bromodomain</keyword>
<keyword id="KW-0156">Chromatin regulator</keyword>
<keyword id="KW-0158">Chromosome</keyword>
<keyword id="KW-0217">Developmental protein</keyword>
<keyword id="KW-0238">DNA-binding</keyword>
<keyword id="KW-0479">Metal-binding</keyword>
<keyword id="KW-0488">Methylation</keyword>
<keyword id="KW-0489">Methyltransferase</keyword>
<keyword id="KW-0539">Nucleus</keyword>
<keyword id="KW-1185">Reference proteome</keyword>
<keyword id="KW-0677">Repeat</keyword>
<keyword id="KW-0949">S-adenosyl-L-methionine</keyword>
<keyword id="KW-0804">Transcription</keyword>
<keyword id="KW-0805">Transcription regulation</keyword>
<keyword id="KW-0808">Transferase</keyword>
<keyword id="KW-0862">Zinc</keyword>
<keyword id="KW-0863">Zinc-finger</keyword>
<sequence>MGRSKFPGKPSKSINRKRISVLQLEDDAANPAEPQQPAPESQQPSGSGSGSSAAREKGNNCDNDEDDNAPGGASISGNTASSSAGSGNSGNGSSSGSSTGSGSSGSGSTNGGSVNGGTHHKSAANLDKEAVTKDQNGDGDKTRGNVSSAPSGKLSAAASGKALSKSSRTFSASTSVTSSGRSSGSSPDGNSGASSDGASSGISCGKSTAKSTEASSGKLAKTTGAGTCSSAKSSKASSGTTSEATTSGLSGACLKALFVATPATSTGLACALVSPGGSSQGGTFPISAALLRARKNSNKKFKNLNLARGEVMLPSTSKLKQLNSPVVDNPSPSPPIASGSTPSVEGGIGVGGVVSPGEDAALKRVLTEMPNEVARDPSPSSCTAAANGAASGKGSASNGPPAMASSGDGSSPKSGADTGPSTSSTTAKQKKTVTFRNVLETSDDKSVVKRFYNPDIRIPIVSIMKKDSLNRPLNYSRGGECIVRPSILSKILNKNSNIDKLNSLKFRSAGASSSSSNQESGSSSNVFGLSRAFGAPMDEDDEGGVTFRRNDSPEDQNNAEDDEMDDDDDDEEAEEDDENEDDNDEAVSEKSAETEKSAGADERDPDEKQLVMDSHFVLPKRSTRSSRIIKPNKRLLEEGAISTKKPLSLGDSKGKNVFGTSSSSAGSTASTFSASTNLKLGKETFFNFGTLKPNSSAAGNFVLRQPRLQFQADNQQATFTAPKACPTSPSAIPKPANSLATSSFGSLASTNSSTVTPTPSACSICSAVVSSKEVTQARKYGVVACDVCRKFFSKMTKKSISANSSTANTSSGSQQYLQCKGNEGSPCSIHSAKSQLKNFKKFYKDRCTACWLKKCMISFQLPAAHRSRLSAILPPGMRGEAAAREEKSAELLSPTGSLRFTSTASSSSPSVVASTSVKWKSSGDSTSALTSIKPNPLAENNVTFGSTPLLRPAILENPLFLKISNAADQKLAAAEAISPSLTKKNSKQEKEKVKESEQSEKLLSPTQAGTKKSGAAEAQVEEVQPQKEEAPQTSTTTQPSASNGASHGVPQAELAGETNATGDTLKRQRIDLKGPRVKHVCRSASIVLGQPLATFGEDQQPEDAADMQQEIAAPVPSAIMEPSPEKPTHIVTDENDNCASCKTSPVGDESKPSKSSGSAQAEVKKATALGKEGTASAAGGSSAKVTTRNAAVASNLIVAASKKQRNGDIATSSSVTQSSNQTQGRKTKEHRQQRTLISIDFWENYDPAEVCQTGFGLIVTETVAQRALCFLCGSTGLDPLIFCACCCEPYHQYCVQDEYNLKHGSFEDTTLMGSLLETTVNASTGPSSSLNQLTQRLNWLCPRCTVCYTCNMSSGSKVKCQKCQKNYHSTCLGTSKRLLGADRPLICVNCLKCKSCSTTKVSKFVGNLPMCTGCFKLRKKGNFCPICQRCYDDNDFDLKMMECGDCGQWVHSKCEGLSDEQYNLLSTLPESIEFICKKCARRNESSKIKAEEWRQAVMEEFKASLYSVLKLLSKSRQACALLKLSPRKKLRCTCGASSNQGKLQPKALQFSSGSDNGLGSDGESQNSDDVYEFKDQQQQQQQRNANMNKPRVKSLPCSCQQHISHSQSFSLVDIKQKIAGNSYVSLAEFNYDMSQVIQQSNCDELDIAYKELLSEQFPWFQNETKACTDALEEDMFESCSGGNYEDLQDTGGVSASVYNEHSTSQAESRSGVLDIPLEEVDDFGSCGIKMRLDTRMCLFCRKSGEGLSGEEARLLYCGHDCWVHTNCAMWSAEVFEEIDGSLQNVHSAVARGRMIKCTVCGNRGATVGCNVRSCGEHYHYPCARSIDCAFLTDKSMYCPAHAKNGNALKANGSPSVTYESNFEVSRPVYVELDRKRKKLIEPARVQFHIGSLEVRQLGAIVPRFSDSYEAVVPINFLCSRLYWSSKEPWKIVEYTVRTTIQNSSSTLTALDVGRNYTVDHTNPNSKEVQLGMAQIARWHTSLARSEFLENGGTDWSGEFPNPNSCVPPDENTEEEPQQQADLLPPELKDAIFEDLPHELLDGISMLDIFLYDDKTDLFAISEQSKDGTQAMTSNQAQNQNQQAGGANSVSICDEDTRNSNTSLGNGWPASNPVEDAMLSAARNSSQVQMLKTLAWPKLDGNSAMATAIKRRKLSKNLAEGVFLTLSSQQRNKKEMATVAGVSRRQSISETSVEGVATTSGSVRSKSFTWSAAKRYFEKSEGREEAAKMRIMQMDGVDDSITEFRIISGDGNLSTAQFSGQVKCDRCQCTYRNYDAFQRHLPSCSPTMSSNETESDVSGQGMTNNATQISAESLNELQKQLLANAGGLNYLQSATSFPQVQSLGSLGQFGLQGLQQLQLQPQSLGSGFFLSQPNPATQANTDDLQIYANSLQSLAANLGGGFTLAQPTVTAPAQPQLIAVSTNPDGTQQFIQIPQTMQATTTPTATYQTLQATNTDKKIMLPLTAAGKPLKTVATKAAQQAAVKQRQLKSGHQVKPIQAKLQPHPQQHQQQQQTQVQQPITVMGQNLLQPQLLFQSSTQTQAPQIILPQAQPQNIISFVTGDGSQGQPLQYISIPTAGEYKPQPQPTATPTFLTTAPGAGATYLQTDASGNLVLTTTPSNSGLQMLTAQSLQAQPQVIGTLIQPQTIQLGGGADGNQPGSNQQPLILGGTGGGSSGLEFATTSPQVILATQPMYYGLETIVQNTVMSSQQFVSTAMPGMLSQNASFSATTTQVFQASKIEPIVDLPAGYVVLNNTGDASSAGTFLNAASVLQQQTQDDTTTQILQNANFQFQSVPTSSGASTSMDYTSPVMVTAKIPPVTQIKRTNAQAKAAGISGVGKVPPQPQVVNKVLPTSIVTQQSQVQVKNSNLKQSQVKGKAASGTGTTCGAPPSIASKPLQKKTNMIRPIHKLEVKPKVMKPTPKVQNQNHSLLQQQQQQQPQLQQQIPAVVVNQVPKVTISQQRIPAQTQQQQLQQAQMIHIPQQQQPLQQQQVQVQPSMPIITLAEAPVVQSQFVMEPQALEQQELANRVQHFSTSSSSSSSNCSLPTNVVNPMQQQAPSTTSSSTTRPTNRVLPMQQRQEPAPLSNECPVVSSPTPPKPVEQPIIHQMTSASVSKCYAQKSTLPSPVYEAELKVSSVLESIVPDVTMDAILEEQPVTESIYTEGLYEKNSPGESKTEQLLLQQQQREQLNQQLVNNGYLLDKHTFQVEPMDTDVYREEDLEEEEDEDDDFSLKMATSACNDHEMSDSEEPAVKDKISKILDNLTNDDCADSIATATTMEVDASAGYQQMVEDVLATTAAQSAPTEEFEGALETAAVEAAATYINEMADAHVLDLKQLQNGVELELRRRKEEQRTVSQEQEQSKAAIVPTAAAPEPPQPIQEPKKMTGPHLLYEIQSEDGFTYKSSSITEIWEKVFEAVQVARRAHGLTPLPEGPLADMGGIQMIGLKTNALKYLIEQLPGVEKCSKYTPKYHKRNGNVSTAANGAHGGNLGGSSASAALSVSGGDSHGLLDYGSDQDELEENAYDCARCEPYSNRSEYDMFSWLASRHRKQPIQVFVQPSDNELVPRRGTGSNLPMAMKYRTLKETYKDYVGVFRSHIHGRGLYCTKDIEAGEMVIEYAGELIRSTLTDKRERYYDSRGIGCYMFKIDDNLVVDATMRGNAARFINHCCEPNCYSKVVDILGHKHIIIFALRRIVQGEELTYDYKFPFEDEKIPCSCGSKRCRKYLN</sequence>